<feature type="chain" id="PRO_0000162708" description="Ribosomal large subunit pseudouridine synthase D">
    <location>
        <begin position="1"/>
        <end position="331"/>
    </location>
</feature>
<feature type="domain" description="S4 RNA-binding" evidence="3">
    <location>
        <begin position="25"/>
        <end position="97"/>
    </location>
</feature>
<feature type="active site" evidence="1">
    <location>
        <position position="145"/>
    </location>
</feature>
<organism>
    <name type="scientific">Xylella fastidiosa (strain Temecula1 / ATCC 700964)</name>
    <dbReference type="NCBI Taxonomy" id="183190"/>
    <lineage>
        <taxon>Bacteria</taxon>
        <taxon>Pseudomonadati</taxon>
        <taxon>Pseudomonadota</taxon>
        <taxon>Gammaproteobacteria</taxon>
        <taxon>Lysobacterales</taxon>
        <taxon>Lysobacteraceae</taxon>
        <taxon>Xylella</taxon>
    </lineage>
</organism>
<dbReference type="EC" id="5.4.99.23" evidence="2"/>
<dbReference type="EMBL" id="AE009442">
    <property type="protein sequence ID" value="AAO29589.1"/>
    <property type="molecule type" value="Genomic_DNA"/>
</dbReference>
<dbReference type="SMR" id="Q87AR7"/>
<dbReference type="KEGG" id="xft:PD_1755"/>
<dbReference type="HOGENOM" id="CLU_016902_4_0_6"/>
<dbReference type="Proteomes" id="UP000002516">
    <property type="component" value="Chromosome"/>
</dbReference>
<dbReference type="GO" id="GO:0005737">
    <property type="term" value="C:cytoplasm"/>
    <property type="evidence" value="ECO:0007669"/>
    <property type="project" value="UniProtKB-SubCell"/>
</dbReference>
<dbReference type="GO" id="GO:0160140">
    <property type="term" value="F:23S rRNA pseudouridine(1911/1915/1917) synthase activity"/>
    <property type="evidence" value="ECO:0007669"/>
    <property type="project" value="UniProtKB-EC"/>
</dbReference>
<dbReference type="GO" id="GO:0003723">
    <property type="term" value="F:RNA binding"/>
    <property type="evidence" value="ECO:0007669"/>
    <property type="project" value="UniProtKB-KW"/>
</dbReference>
<dbReference type="GO" id="GO:0000455">
    <property type="term" value="P:enzyme-directed rRNA pseudouridine synthesis"/>
    <property type="evidence" value="ECO:0007669"/>
    <property type="project" value="UniProtKB-ARBA"/>
</dbReference>
<dbReference type="CDD" id="cd02869">
    <property type="entry name" value="PseudoU_synth_RluA_like"/>
    <property type="match status" value="1"/>
</dbReference>
<dbReference type="CDD" id="cd00165">
    <property type="entry name" value="S4"/>
    <property type="match status" value="1"/>
</dbReference>
<dbReference type="Gene3D" id="3.30.2350.10">
    <property type="entry name" value="Pseudouridine synthase"/>
    <property type="match status" value="1"/>
</dbReference>
<dbReference type="Gene3D" id="3.10.290.10">
    <property type="entry name" value="RNA-binding S4 domain"/>
    <property type="match status" value="1"/>
</dbReference>
<dbReference type="InterPro" id="IPR020103">
    <property type="entry name" value="PsdUridine_synth_cat_dom_sf"/>
</dbReference>
<dbReference type="InterPro" id="IPR006224">
    <property type="entry name" value="PsdUridine_synth_RluA-like_CS"/>
</dbReference>
<dbReference type="InterPro" id="IPR006225">
    <property type="entry name" value="PsdUridine_synth_RluC/D"/>
</dbReference>
<dbReference type="InterPro" id="IPR006145">
    <property type="entry name" value="PsdUridine_synth_RsuA/RluA"/>
</dbReference>
<dbReference type="InterPro" id="IPR050188">
    <property type="entry name" value="RluA_PseudoU_synthase"/>
</dbReference>
<dbReference type="InterPro" id="IPR002942">
    <property type="entry name" value="S4_RNA-bd"/>
</dbReference>
<dbReference type="InterPro" id="IPR036986">
    <property type="entry name" value="S4_RNA-bd_sf"/>
</dbReference>
<dbReference type="NCBIfam" id="NF008385">
    <property type="entry name" value="PRK11180.1"/>
    <property type="match status" value="1"/>
</dbReference>
<dbReference type="NCBIfam" id="TIGR00005">
    <property type="entry name" value="rluA_subfam"/>
    <property type="match status" value="1"/>
</dbReference>
<dbReference type="PANTHER" id="PTHR21600">
    <property type="entry name" value="MITOCHONDRIAL RNA PSEUDOURIDINE SYNTHASE"/>
    <property type="match status" value="1"/>
</dbReference>
<dbReference type="PANTHER" id="PTHR21600:SF44">
    <property type="entry name" value="RIBOSOMAL LARGE SUBUNIT PSEUDOURIDINE SYNTHASE D"/>
    <property type="match status" value="1"/>
</dbReference>
<dbReference type="Pfam" id="PF00849">
    <property type="entry name" value="PseudoU_synth_2"/>
    <property type="match status" value="1"/>
</dbReference>
<dbReference type="Pfam" id="PF01479">
    <property type="entry name" value="S4"/>
    <property type="match status" value="1"/>
</dbReference>
<dbReference type="SUPFAM" id="SSF55174">
    <property type="entry name" value="Alpha-L RNA-binding motif"/>
    <property type="match status" value="1"/>
</dbReference>
<dbReference type="SUPFAM" id="SSF55120">
    <property type="entry name" value="Pseudouridine synthase"/>
    <property type="match status" value="1"/>
</dbReference>
<dbReference type="PROSITE" id="PS01129">
    <property type="entry name" value="PSI_RLU"/>
    <property type="match status" value="1"/>
</dbReference>
<dbReference type="PROSITE" id="PS50889">
    <property type="entry name" value="S4"/>
    <property type="match status" value="1"/>
</dbReference>
<gene>
    <name type="primary">rluD</name>
    <name type="ordered locus">PD_1755</name>
</gene>
<proteinExistence type="inferred from homology"/>
<evidence type="ECO:0000250" key="1"/>
<evidence type="ECO:0000250" key="2">
    <source>
        <dbReference type="UniProtKB" id="P33643"/>
    </source>
</evidence>
<evidence type="ECO:0000255" key="3">
    <source>
        <dbReference type="PROSITE-ProRule" id="PRU00182"/>
    </source>
</evidence>
<evidence type="ECO:0000305" key="4"/>
<reference key="1">
    <citation type="journal article" date="2003" name="J. Bacteriol.">
        <title>Comparative analyses of the complete genome sequences of Pierce's disease and citrus variegated chlorosis strains of Xylella fastidiosa.</title>
        <authorList>
            <person name="Van Sluys M.A."/>
            <person name="de Oliveira M.C."/>
            <person name="Monteiro-Vitorello C.B."/>
            <person name="Miyaki C.Y."/>
            <person name="Furlan L.R."/>
            <person name="Camargo L.E.A."/>
            <person name="da Silva A.C.R."/>
            <person name="Moon D.H."/>
            <person name="Takita M.A."/>
            <person name="Lemos E.G.M."/>
            <person name="Machado M.A."/>
            <person name="Ferro M.I.T."/>
            <person name="da Silva F.R."/>
            <person name="Goldman M.H.S."/>
            <person name="Goldman G.H."/>
            <person name="Lemos M.V.F."/>
            <person name="El-Dorry H."/>
            <person name="Tsai S.M."/>
            <person name="Carrer H."/>
            <person name="Carraro D.M."/>
            <person name="de Oliveira R.C."/>
            <person name="Nunes L.R."/>
            <person name="Siqueira W.J."/>
            <person name="Coutinho L.L."/>
            <person name="Kimura E.T."/>
            <person name="Ferro E.S."/>
            <person name="Harakava R."/>
            <person name="Kuramae E.E."/>
            <person name="Marino C.L."/>
            <person name="Giglioti E."/>
            <person name="Abreu I.L."/>
            <person name="Alves L.M.C."/>
            <person name="do Amaral A.M."/>
            <person name="Baia G.S."/>
            <person name="Blanco S.R."/>
            <person name="Brito M.S."/>
            <person name="Cannavan F.S."/>
            <person name="Celestino A.V."/>
            <person name="da Cunha A.F."/>
            <person name="Fenille R.C."/>
            <person name="Ferro J.A."/>
            <person name="Formighieri E.F."/>
            <person name="Kishi L.T."/>
            <person name="Leoni S.G."/>
            <person name="Oliveira A.R."/>
            <person name="Rosa V.E. Jr."/>
            <person name="Sassaki F.T."/>
            <person name="Sena J.A.D."/>
            <person name="de Souza A.A."/>
            <person name="Truffi D."/>
            <person name="Tsukumo F."/>
            <person name="Yanai G.M."/>
            <person name="Zaros L.G."/>
            <person name="Civerolo E.L."/>
            <person name="Simpson A.J.G."/>
            <person name="Almeida N.F. Jr."/>
            <person name="Setubal J.C."/>
            <person name="Kitajima J.P."/>
        </authorList>
    </citation>
    <scope>NUCLEOTIDE SEQUENCE [LARGE SCALE GENOMIC DNA]</scope>
    <source>
        <strain>Temecula1 / ATCC 700964</strain>
    </source>
</reference>
<name>RLUD_XYLFT</name>
<comment type="function">
    <text evidence="2">Responsible for synthesis of pseudouridine from uracil at positions 1911, 1915 and 1917 in 23S ribosomal RNA.</text>
</comment>
<comment type="catalytic activity">
    <reaction evidence="2">
        <text>uridine(1911/1915/1917) in 23S rRNA = pseudouridine(1911/1915/1917) in 23S rRNA</text>
        <dbReference type="Rhea" id="RHEA:42524"/>
        <dbReference type="Rhea" id="RHEA-COMP:10097"/>
        <dbReference type="Rhea" id="RHEA-COMP:10098"/>
        <dbReference type="ChEBI" id="CHEBI:65314"/>
        <dbReference type="ChEBI" id="CHEBI:65315"/>
        <dbReference type="EC" id="5.4.99.23"/>
    </reaction>
</comment>
<comment type="subcellular location">
    <subcellularLocation>
        <location evidence="2">Cytoplasm</location>
    </subcellularLocation>
    <text evidence="2">Associates with late stage pre-50S ribosomal subunits.</text>
</comment>
<comment type="similarity">
    <text evidence="4">Belongs to the pseudouridine synthase RluA family.</text>
</comment>
<accession>Q87AR7</accession>
<protein>
    <recommendedName>
        <fullName evidence="2">Ribosomal large subunit pseudouridine synthase D</fullName>
        <ecNumber evidence="2">5.4.99.23</ecNumber>
    </recommendedName>
    <alternativeName>
        <fullName>23S rRNA pseudouridine(1911/1915/1917) synthase</fullName>
    </alternativeName>
    <alternativeName>
        <fullName>rRNA pseudouridylate synthase D</fullName>
    </alternativeName>
    <alternativeName>
        <fullName>rRNA-uridine isomerase D</fullName>
    </alternativeName>
</protein>
<sequence>MLVFMSDDLAGFSRQTTVPDGAAGRRFDAVLAELFPEFSRSRLTEWIKSGDVLLNGVLVRPRDPVYGGEVVWLQVMPDIRTDAVPQDIPLDILYEDEHVFVINKPAGLVVHPGAGNPDGTLVNALLHRDPALAAVPRAGVVHRLDKDTSGVMVVARTLQAQTALVEQLSSRQVHRQYLAVVVSALVSGGTVNAAIERHPRDRLRMEVSDTGKEAVTHYRLRERFRAHTALECRLDTGRTHQIRVHMAHLRHPIVGDRLYGGSLKLPKGGTDALVAMLRGFKRQALHAEVLEFLHPVRALPVRIVAPVPEDLCQLLAALREDSALFFEREWR</sequence>
<keyword id="KW-0963">Cytoplasm</keyword>
<keyword id="KW-0413">Isomerase</keyword>
<keyword id="KW-1185">Reference proteome</keyword>
<keyword id="KW-0694">RNA-binding</keyword>
<keyword id="KW-0698">rRNA processing</keyword>